<sequence length="386" mass="44050">MLSGSPGQTPPAPFPSPPPPAPAQPPPPFPQFHVKSGLQIRKNAITDDYKVTSQVLGLGINGKVLRIFDKRTQQKFALKMLQDCPKARREVELHWRASQCPHIVHIVDVYENLYAGRKCLLIVMECLDGGELFSRIQDRGDQAFTEREASEIMKSIGEAIQYLHSINIAHRDVKPENLLYTSKRPNAILKLTDFGFAKETTSHNSLTTPCYTPYYVAPEVLGPEKYDKSCDMWSLGVIMYILLCGYPPFYSNHGLAISPGMKTRIRMGQYEFPNPEWSEVSEEVKMLIRNLLKTEPTQRMTITEFMNHPWIMQSTKVPQTPLHTSRVLKEDKERWEDVKEEMTSALATMRVDYEQIKIKKIEDASNPLLLKRRKKARAVEDAALAH</sequence>
<gene>
    <name type="primary">Mapkapk2</name>
    <name type="synonym">Rps6kc1</name>
</gene>
<accession>P49138</accession>
<accession>Q6P561</accession>
<dbReference type="EC" id="2.7.11.1"/>
<dbReference type="EMBL" id="X76850">
    <property type="protein sequence ID" value="CAA54183.1"/>
    <property type="molecule type" value="mRNA"/>
</dbReference>
<dbReference type="EMBL" id="BC063064">
    <property type="protein sequence ID" value="AAH63064.1"/>
    <property type="molecule type" value="mRNA"/>
</dbReference>
<dbReference type="CCDS" id="CCDS15266.1"/>
<dbReference type="PIR" id="S78100">
    <property type="entry name" value="S78100"/>
</dbReference>
<dbReference type="RefSeq" id="NP_032577.1">
    <property type="nucleotide sequence ID" value="NM_008551.2"/>
</dbReference>
<dbReference type="BMRB" id="P49138"/>
<dbReference type="SMR" id="P49138"/>
<dbReference type="BioGRID" id="201308">
    <property type="interactions" value="12"/>
</dbReference>
<dbReference type="FunCoup" id="P49138">
    <property type="interactions" value="2519"/>
</dbReference>
<dbReference type="IntAct" id="P49138">
    <property type="interactions" value="6"/>
</dbReference>
<dbReference type="MINT" id="P49138"/>
<dbReference type="STRING" id="10090.ENSMUSP00000016672"/>
<dbReference type="BindingDB" id="P49138"/>
<dbReference type="ChEMBL" id="CHEMBL4990"/>
<dbReference type="iPTMnet" id="P49138"/>
<dbReference type="PhosphoSitePlus" id="P49138"/>
<dbReference type="jPOST" id="P49138"/>
<dbReference type="PaxDb" id="10090-ENSMUSP00000016672"/>
<dbReference type="PeptideAtlas" id="P49138"/>
<dbReference type="ProteomicsDB" id="295824"/>
<dbReference type="Pumba" id="P49138"/>
<dbReference type="Antibodypedia" id="4144">
    <property type="antibodies" value="975 antibodies from 47 providers"/>
</dbReference>
<dbReference type="DNASU" id="17164"/>
<dbReference type="Ensembl" id="ENSMUST00000016672.11">
    <property type="protein sequence ID" value="ENSMUSP00000016672.5"/>
    <property type="gene ID" value="ENSMUSG00000016528.11"/>
</dbReference>
<dbReference type="GeneID" id="17164"/>
<dbReference type="KEGG" id="mmu:17164"/>
<dbReference type="UCSC" id="uc007cmv.1">
    <property type="organism name" value="mouse"/>
</dbReference>
<dbReference type="AGR" id="MGI:109298"/>
<dbReference type="CTD" id="9261"/>
<dbReference type="MGI" id="MGI:109298">
    <property type="gene designation" value="Mapkapk2"/>
</dbReference>
<dbReference type="VEuPathDB" id="HostDB:ENSMUSG00000016528"/>
<dbReference type="eggNOG" id="KOG0604">
    <property type="taxonomic scope" value="Eukaryota"/>
</dbReference>
<dbReference type="GeneTree" id="ENSGT00940000157261"/>
<dbReference type="InParanoid" id="P49138"/>
<dbReference type="OMA" id="FPQFHIK"/>
<dbReference type="OrthoDB" id="40902at2759"/>
<dbReference type="PhylomeDB" id="P49138"/>
<dbReference type="TreeFam" id="TF312891"/>
<dbReference type="Reactome" id="R-MMU-171007">
    <property type="pathway name" value="p38MAPK events"/>
</dbReference>
<dbReference type="Reactome" id="R-MMU-199920">
    <property type="pathway name" value="CREB phosphorylation"/>
</dbReference>
<dbReference type="Reactome" id="R-MMU-2142691">
    <property type="pathway name" value="Synthesis of Leukotrienes (LT) and Eoxins (EX)"/>
</dbReference>
<dbReference type="Reactome" id="R-MMU-2559580">
    <property type="pathway name" value="Oxidative Stress Induced Senescence"/>
</dbReference>
<dbReference type="Reactome" id="R-MMU-3371453">
    <property type="pathway name" value="Regulation of HSF1-mediated heat shock response"/>
</dbReference>
<dbReference type="Reactome" id="R-MMU-4420097">
    <property type="pathway name" value="VEGFA-VEGFR2 Pathway"/>
</dbReference>
<dbReference type="Reactome" id="R-MMU-450302">
    <property type="pathway name" value="activated TAK1 mediates p38 MAPK activation"/>
</dbReference>
<dbReference type="Reactome" id="R-MMU-450385">
    <property type="pathway name" value="Butyrate Response Factor 1 (BRF1) binds and destabilizes mRNA"/>
</dbReference>
<dbReference type="Reactome" id="R-MMU-450513">
    <property type="pathway name" value="Tristetraprolin (TTP, ZFP36) binds and destabilizes mRNA"/>
</dbReference>
<dbReference type="Reactome" id="R-MMU-5357905">
    <property type="pathway name" value="Regulation of TNFR1 signaling"/>
</dbReference>
<dbReference type="BioGRID-ORCS" id="17164">
    <property type="hits" value="6 hits in 79 CRISPR screens"/>
</dbReference>
<dbReference type="ChiTaRS" id="Mapkapk2">
    <property type="organism name" value="mouse"/>
</dbReference>
<dbReference type="PRO" id="PR:P49138"/>
<dbReference type="Proteomes" id="UP000000589">
    <property type="component" value="Chromosome 1"/>
</dbReference>
<dbReference type="RNAct" id="P49138">
    <property type="molecule type" value="protein"/>
</dbReference>
<dbReference type="Bgee" id="ENSMUSG00000016528">
    <property type="expression patterns" value="Expressed in plantaris and 245 other cell types or tissues"/>
</dbReference>
<dbReference type="ExpressionAtlas" id="P49138">
    <property type="expression patterns" value="baseline and differential"/>
</dbReference>
<dbReference type="GO" id="GO:0005813">
    <property type="term" value="C:centrosome"/>
    <property type="evidence" value="ECO:0007669"/>
    <property type="project" value="Ensembl"/>
</dbReference>
<dbReference type="GO" id="GO:0036064">
    <property type="term" value="C:ciliary basal body"/>
    <property type="evidence" value="ECO:0007669"/>
    <property type="project" value="Ensembl"/>
</dbReference>
<dbReference type="GO" id="GO:0005737">
    <property type="term" value="C:cytoplasm"/>
    <property type="evidence" value="ECO:0000314"/>
    <property type="project" value="UniProtKB"/>
</dbReference>
<dbReference type="GO" id="GO:0005829">
    <property type="term" value="C:cytosol"/>
    <property type="evidence" value="ECO:0007669"/>
    <property type="project" value="Ensembl"/>
</dbReference>
<dbReference type="GO" id="GO:0005654">
    <property type="term" value="C:nucleoplasm"/>
    <property type="evidence" value="ECO:0007669"/>
    <property type="project" value="Ensembl"/>
</dbReference>
<dbReference type="GO" id="GO:0005634">
    <property type="term" value="C:nucleus"/>
    <property type="evidence" value="ECO:0000314"/>
    <property type="project" value="UniProtKB"/>
</dbReference>
<dbReference type="GO" id="GO:0005524">
    <property type="term" value="F:ATP binding"/>
    <property type="evidence" value="ECO:0007669"/>
    <property type="project" value="UniProtKB-KW"/>
</dbReference>
<dbReference type="GO" id="GO:0106310">
    <property type="term" value="F:protein serine kinase activity"/>
    <property type="evidence" value="ECO:0007669"/>
    <property type="project" value="RHEA"/>
</dbReference>
<dbReference type="GO" id="GO:0004674">
    <property type="term" value="F:protein serine/threonine kinase activity"/>
    <property type="evidence" value="ECO:0000314"/>
    <property type="project" value="UniProtKB"/>
</dbReference>
<dbReference type="GO" id="GO:0070935">
    <property type="term" value="P:3'-UTR-mediated mRNA stabilization"/>
    <property type="evidence" value="ECO:0000250"/>
    <property type="project" value="UniProtKB"/>
</dbReference>
<dbReference type="GO" id="GO:0035924">
    <property type="term" value="P:cellular response to vascular endothelial growth factor stimulus"/>
    <property type="evidence" value="ECO:0007669"/>
    <property type="project" value="Ensembl"/>
</dbReference>
<dbReference type="GO" id="GO:0006974">
    <property type="term" value="P:DNA damage response"/>
    <property type="evidence" value="ECO:0000250"/>
    <property type="project" value="UniProtKB"/>
</dbReference>
<dbReference type="GO" id="GO:0006954">
    <property type="term" value="P:inflammatory response"/>
    <property type="evidence" value="ECO:0000315"/>
    <property type="project" value="UniProtKB"/>
</dbReference>
<dbReference type="GO" id="GO:0048839">
    <property type="term" value="P:inner ear development"/>
    <property type="evidence" value="ECO:0000314"/>
    <property type="project" value="MGI"/>
</dbReference>
<dbReference type="GO" id="GO:0044351">
    <property type="term" value="P:macropinocytosis"/>
    <property type="evidence" value="ECO:0000315"/>
    <property type="project" value="UniProtKB"/>
</dbReference>
<dbReference type="GO" id="GO:0048255">
    <property type="term" value="P:mRNA stabilization"/>
    <property type="evidence" value="ECO:0000315"/>
    <property type="project" value="MGI"/>
</dbReference>
<dbReference type="GO" id="GO:0038066">
    <property type="term" value="P:p38MAPK cascade"/>
    <property type="evidence" value="ECO:0000315"/>
    <property type="project" value="MGI"/>
</dbReference>
<dbReference type="GO" id="GO:0060907">
    <property type="term" value="P:positive regulation of macrophage cytokine production"/>
    <property type="evidence" value="ECO:0000315"/>
    <property type="project" value="MGI"/>
</dbReference>
<dbReference type="GO" id="GO:0032760">
    <property type="term" value="P:positive regulation of tumor necrosis factor production"/>
    <property type="evidence" value="ECO:0000315"/>
    <property type="project" value="MGI"/>
</dbReference>
<dbReference type="GO" id="GO:0006468">
    <property type="term" value="P:protein phosphorylation"/>
    <property type="evidence" value="ECO:0000314"/>
    <property type="project" value="UniProtKB"/>
</dbReference>
<dbReference type="GO" id="GO:0032675">
    <property type="term" value="P:regulation of interleukin-6 production"/>
    <property type="evidence" value="ECO:0000315"/>
    <property type="project" value="UniProtKB"/>
</dbReference>
<dbReference type="GO" id="GO:0032680">
    <property type="term" value="P:regulation of tumor necrosis factor production"/>
    <property type="evidence" value="ECO:0000315"/>
    <property type="project" value="UniProtKB"/>
</dbReference>
<dbReference type="GO" id="GO:0034097">
    <property type="term" value="P:response to cytokine"/>
    <property type="evidence" value="ECO:0000250"/>
    <property type="project" value="UniProtKB"/>
</dbReference>
<dbReference type="GO" id="GO:0032496">
    <property type="term" value="P:response to lipopolysaccharide"/>
    <property type="evidence" value="ECO:0000315"/>
    <property type="project" value="UniProtKB"/>
</dbReference>
<dbReference type="GO" id="GO:0002224">
    <property type="term" value="P:toll-like receptor signaling pathway"/>
    <property type="evidence" value="ECO:0000315"/>
    <property type="project" value="UniProtKB"/>
</dbReference>
<dbReference type="GO" id="GO:0048010">
    <property type="term" value="P:vascular endothelial growth factor receptor signaling pathway"/>
    <property type="evidence" value="ECO:0007669"/>
    <property type="project" value="Ensembl"/>
</dbReference>
<dbReference type="CDD" id="cd14170">
    <property type="entry name" value="STKc_MAPKAPK2"/>
    <property type="match status" value="1"/>
</dbReference>
<dbReference type="FunFam" id="1.10.510.10:FF:000094">
    <property type="entry name" value="MAP kinase-activated protein kinase 2"/>
    <property type="match status" value="1"/>
</dbReference>
<dbReference type="FunFam" id="3.30.200.20:FF:000156">
    <property type="entry name" value="MAP kinase-activated protein kinase 3"/>
    <property type="match status" value="1"/>
</dbReference>
<dbReference type="FunFam" id="4.10.1170.10:FF:000001">
    <property type="entry name" value="MAP kinase-activated protein kinase 3"/>
    <property type="match status" value="1"/>
</dbReference>
<dbReference type="Gene3D" id="4.10.1170.10">
    <property type="entry name" value="MAP kinase activated protein kinase 2"/>
    <property type="match status" value="1"/>
</dbReference>
<dbReference type="Gene3D" id="3.30.200.20">
    <property type="entry name" value="Phosphorylase Kinase, domain 1"/>
    <property type="match status" value="1"/>
</dbReference>
<dbReference type="Gene3D" id="1.10.510.10">
    <property type="entry name" value="Transferase(Phosphotransferase) domain 1"/>
    <property type="match status" value="1"/>
</dbReference>
<dbReference type="InterPro" id="IPR011009">
    <property type="entry name" value="Kinase-like_dom_sf"/>
</dbReference>
<dbReference type="InterPro" id="IPR027442">
    <property type="entry name" value="MAPKAPK_C"/>
</dbReference>
<dbReference type="InterPro" id="IPR000719">
    <property type="entry name" value="Prot_kinase_dom"/>
</dbReference>
<dbReference type="InterPro" id="IPR017441">
    <property type="entry name" value="Protein_kinase_ATP_BS"/>
</dbReference>
<dbReference type="InterPro" id="IPR008271">
    <property type="entry name" value="Ser/Thr_kinase_AS"/>
</dbReference>
<dbReference type="PANTHER" id="PTHR24347">
    <property type="entry name" value="SERINE/THREONINE-PROTEIN KINASE"/>
    <property type="match status" value="1"/>
</dbReference>
<dbReference type="Pfam" id="PF00069">
    <property type="entry name" value="Pkinase"/>
    <property type="match status" value="1"/>
</dbReference>
<dbReference type="SMART" id="SM00220">
    <property type="entry name" value="S_TKc"/>
    <property type="match status" value="1"/>
</dbReference>
<dbReference type="SUPFAM" id="SSF56112">
    <property type="entry name" value="Protein kinase-like (PK-like)"/>
    <property type="match status" value="1"/>
</dbReference>
<dbReference type="PROSITE" id="PS00107">
    <property type="entry name" value="PROTEIN_KINASE_ATP"/>
    <property type="match status" value="1"/>
</dbReference>
<dbReference type="PROSITE" id="PS50011">
    <property type="entry name" value="PROTEIN_KINASE_DOM"/>
    <property type="match status" value="1"/>
</dbReference>
<dbReference type="PROSITE" id="PS00108">
    <property type="entry name" value="PROTEIN_KINASE_ST"/>
    <property type="match status" value="1"/>
</dbReference>
<reference key="1">
    <citation type="journal article" date="1993" name="FEBS Lett.">
        <title>The MAP kinase-activated protein kinase 2 contains a proline-rich SH3-binding domain.</title>
        <authorList>
            <person name="Engel K."/>
            <person name="Plath K."/>
            <person name="Gaestel M."/>
        </authorList>
    </citation>
    <scope>NUCLEOTIDE SEQUENCE [MRNA] OF 2-386</scope>
    <source>
        <tissue>Lung</tissue>
    </source>
</reference>
<reference key="2">
    <citation type="journal article" date="2004" name="Genome Res.">
        <title>The status, quality, and expansion of the NIH full-length cDNA project: the Mammalian Gene Collection (MGC).</title>
        <authorList>
            <consortium name="The MGC Project Team"/>
        </authorList>
    </citation>
    <scope>NUCLEOTIDE SEQUENCE [LARGE SCALE MRNA]</scope>
    <source>
        <strain>C57BL/6J</strain>
        <tissue>Brain</tissue>
    </source>
</reference>
<reference key="3">
    <citation type="journal article" date="1993" name="J. Biol. Chem.">
        <title>Small heat shock proteins are molecular chaperones.</title>
        <authorList>
            <person name="Jakob U."/>
            <person name="Gaestel M."/>
            <person name="Engel K."/>
            <person name="Buchner J."/>
        </authorList>
    </citation>
    <scope>FUNCTION IN PHOSPHORYLATION OF HSPB1</scope>
</reference>
<reference key="4">
    <citation type="journal article" date="1995" name="J. Biol. Chem.">
        <title>Constitutive activation of mitogen-activated protein kinase-activated protein kinase 2 by mutation of phosphorylation sites and an A-helix motif.</title>
        <authorList>
            <person name="Engel K."/>
            <person name="Schultz H."/>
            <person name="Martin F."/>
            <person name="Kotlyarov A."/>
            <person name="Plath K."/>
            <person name="Hahn M."/>
            <person name="Heinemann U."/>
            <person name="Gaestel M."/>
        </authorList>
    </citation>
    <scope>SUBCELLULAR LOCATION</scope>
    <scope>PHOSPHORYLATION AT THR-208 AND THR-320</scope>
    <scope>MUTAGENESIS OF THR-208; THR-320; LYS-329 AND TRP-335</scope>
</reference>
<reference key="5">
    <citation type="journal article" date="1999" name="Nat. Cell Biol.">
        <title>MAPKAP kinase 2 is essential for LPS-induced TNF-alpha biosynthesis.</title>
        <authorList>
            <person name="Kotlyarov A."/>
            <person name="Neininger A."/>
            <person name="Schubert C."/>
            <person name="Eckert R."/>
            <person name="Birchmeier C."/>
            <person name="Volk H.D."/>
            <person name="Gaestel M."/>
        </authorList>
    </citation>
    <scope>FUNCTION</scope>
    <scope>DISRUPTION PHENOTYPE</scope>
</reference>
<reference key="6">
    <citation type="journal article" date="1998" name="EMBO J.">
        <title>Leptomycin B-sensitive nuclear export of MAPKAP kinase 2 is regulated by phosphorylation.</title>
        <authorList>
            <person name="Engel K."/>
            <person name="Kotlyarov A."/>
            <person name="Gaestel M."/>
        </authorList>
    </citation>
    <scope>SUBCELLULAR LOCATION</scope>
    <scope>PHOSPHORYLATION AT THR-208 AND THR-320</scope>
    <scope>NUCLEAR EXPORT SIGNAL (NES)</scope>
</reference>
<reference key="7">
    <citation type="journal article" date="2002" name="EMBO J.">
        <title>Inhibition of SAPK2a/p38 prevents hnRNP A0 phosphorylation by MAPKAP-K2 and its interaction with cytokine mRNAs.</title>
        <authorList>
            <person name="Rousseau S."/>
            <person name="Morrice N."/>
            <person name="Peggie M."/>
            <person name="Campbell D.G."/>
            <person name="Gaestel M."/>
            <person name="Cohen P."/>
        </authorList>
    </citation>
    <scope>FUNCTION IN PHOSPHORYLATION OF HNRNPA0</scope>
</reference>
<reference key="8">
    <citation type="journal article" date="2002" name="Mol. Cell. Biol.">
        <title>Distinct cellular functions of MK2.</title>
        <authorList>
            <person name="Kotlyarov A."/>
            <person name="Yannoni Y."/>
            <person name="Fritz S."/>
            <person name="Laass K."/>
            <person name="Telliez J.B."/>
            <person name="Pitman D."/>
            <person name="Lin L.L."/>
            <person name="Gaestel M."/>
        </authorList>
    </citation>
    <scope>DISRUPTION PHENOTYPE</scope>
</reference>
<reference key="9">
    <citation type="journal article" date="2004" name="J. Biol. Chem.">
        <title>MAPKAP kinase 2 phosphorylates tristetraprolin on in vivo sites including Ser178, a site required for 14-3-3 binding.</title>
        <authorList>
            <person name="Chrestensen C.A."/>
            <person name="Schroeder M.J."/>
            <person name="Shabanowitz J."/>
            <person name="Hunt D.F."/>
            <person name="Pelo J.W."/>
            <person name="Worthington M.T."/>
            <person name="Sturgill T.W."/>
        </authorList>
    </citation>
    <scope>FUNCTION IN PHOSPHORYLATION OF ZFP36</scope>
</reference>
<reference key="10">
    <citation type="journal article" date="2005" name="Biochem. J.">
        <title>The phosphorylation of CapZ-interacting protein (CapZIP) by stress-activated protein kinases triggers its dissociation from CapZ.</title>
        <authorList>
            <person name="Eyers C.E."/>
            <person name="McNeill H."/>
            <person name="Knebel A."/>
            <person name="Morrice N."/>
            <person name="Arthur S.J.C."/>
            <person name="Cuenda A."/>
            <person name="Cohen P."/>
        </authorList>
    </citation>
    <scope>FUNCTION IN PHOSPHORYLATION OF RCSD1</scope>
</reference>
<reference key="11">
    <citation type="journal article" date="2007" name="Mol. Cell. Biol.">
        <title>The mitogen-activated protein kinase (MAPK)-activated protein kinases MK2 and MK3 cooperate in stimulation of tumor necrosis factor biosynthesis and stabilization of p38 MAPK.</title>
        <authorList>
            <person name="Ronkina N."/>
            <person name="Kotlyarov A."/>
            <person name="Dittrich-Breiholz O."/>
            <person name="Kracht M."/>
            <person name="Hitti E."/>
            <person name="Milarski K."/>
            <person name="Askew R."/>
            <person name="Marusic S."/>
            <person name="Lin L.L."/>
            <person name="Gaestel M."/>
            <person name="Telliez J.B."/>
        </authorList>
    </citation>
    <scope>DISRUPTION PHENOTYPE</scope>
    <scope>TISSUE SPECIFICITY</scope>
</reference>
<reference key="12">
    <citation type="journal article" date="2007" name="Nat. Immunol.">
        <title>The MAPK-activated kinase Rsk controls an acute Toll-like receptor signaling response in dendritic cells and is activated through two distinct pathways.</title>
        <authorList>
            <person name="Zaru R."/>
            <person name="Ronkina N."/>
            <person name="Gaestel M."/>
            <person name="Arthur J.S."/>
            <person name="Watts C."/>
        </authorList>
    </citation>
    <scope>FUNCTION IN PHOSPHORYLATION OF RPS6KA3</scope>
</reference>
<reference key="13">
    <citation type="journal article" date="2007" name="Proc. Natl. Acad. Sci. U.S.A.">
        <title>Large-scale phosphorylation analysis of mouse liver.</title>
        <authorList>
            <person name="Villen J."/>
            <person name="Beausoleil S.A."/>
            <person name="Gerber S.A."/>
            <person name="Gygi S.P."/>
        </authorList>
    </citation>
    <scope>IDENTIFICATION BY MASS SPECTROMETRY [LARGE SCALE ANALYSIS]</scope>
    <source>
        <tissue>Liver</tissue>
    </source>
</reference>
<reference key="14">
    <citation type="journal article" date="2010" name="Cell">
        <title>A tissue-specific atlas of mouse protein phosphorylation and expression.</title>
        <authorList>
            <person name="Huttlin E.L."/>
            <person name="Jedrychowski M.P."/>
            <person name="Elias J.E."/>
            <person name="Goswami T."/>
            <person name="Rad R."/>
            <person name="Beausoleil S.A."/>
            <person name="Villen J."/>
            <person name="Haas W."/>
            <person name="Sowa M.E."/>
            <person name="Gygi S.P."/>
        </authorList>
    </citation>
    <scope>IDENTIFICATION BY MASS SPECTROMETRY [LARGE SCALE ANALYSIS]</scope>
    <source>
        <tissue>Lung</tissue>
        <tissue>Spleen</tissue>
    </source>
</reference>
<reference key="15">
    <citation type="journal article" date="2010" name="J. Biol. Chem.">
        <title>p38 MAP kinase and MAPKAP kinases MK2/3 cooperatively phosphorylate epithelial keratins.</title>
        <authorList>
            <person name="Menon M.B."/>
            <person name="Schwermann J."/>
            <person name="Singh A.K."/>
            <person name="Franz-Wachtel M."/>
            <person name="Pabst O."/>
            <person name="Seidler U."/>
            <person name="Omary M.B."/>
            <person name="Kotlyarov A."/>
            <person name="Gaestel M."/>
        </authorList>
    </citation>
    <scope>FUNCTION IN PHOSPHORYLATION OF KRT18 AND KRT20</scope>
</reference>
<reference key="16">
    <citation type="journal article" date="2011" name="Biochem. J.">
        <title>Phosphorylation of cAMP-specific PDE4A5 (phosphodiesterase-4A5) by MK2 (MAPKAPK2) attenuates its activation through protein kinase A phosphorylation.</title>
        <authorList>
            <person name="MacKenzie K.F."/>
            <person name="Wallace D.A."/>
            <person name="Hill E.V."/>
            <person name="Anthony D.F."/>
            <person name="Henderson D.J."/>
            <person name="Houslay D.M."/>
            <person name="Arthur J.S."/>
            <person name="Baillie G.S."/>
            <person name="Houslay M.D."/>
        </authorList>
    </citation>
    <scope>FUNCTION IN PHOSPHORYLATION OF PDE4A</scope>
</reference>
<protein>
    <recommendedName>
        <fullName>MAP kinase-activated protein kinase 2</fullName>
        <shortName>MAPK-activated protein kinase 2</shortName>
        <shortName>MAPKAP kinase 2</shortName>
        <shortName>MAPKAP-K2</shortName>
        <shortName>MAPKAPK-2</shortName>
        <shortName>MK-2</shortName>
        <shortName>MK2</shortName>
        <ecNumber>2.7.11.1</ecNumber>
    </recommendedName>
</protein>
<comment type="function">
    <text evidence="2 6 8 9 10 12 13 14 16">Stress-activated serine/threonine-protein kinase involved in cytokine production, endocytosis, reorganization of the cytoskeleton, cell migration, cell cycle control, chromatin remodeling, DNA damage response and transcriptional regulation. Following stress, it is phosphorylated and activated by MAP kinase p38-alpha/MAPK14, leading to phosphorylation of substrates. Phosphorylates serine in the peptide sequence, Hyd-X-R-X(2)-S, where Hyd is a large hydrophobic residue. Phosphorylates ALOX5, CDC25B, CDC25C, CEP131, ELAVL1, HNRNPA0, HSP27/HSPB1, KRT18, KRT20, LIMK1, LSP1, PABPC1, PARN, PDE4A, RCSD1, RPS6KA3, TAB3 and TTP/ZFP36. Phosphorylates HSF1; leading to the interaction with HSP90 proteins and inhibiting HSF1 homotrimerization, DNA-binding and transactivation activities (By similarity). Mediates phosphorylation of HSP27/HSPB1 in response to stress, leading to dissociation of HSP27/HSPB1 from large small heat-shock protein (sHsps) oligomers and impairment of their chaperone activities and ability to protect against oxidative stress effectively. Involved in inflammatory response by regulating tumor necrosis factor (TNF) and IL6 production post-transcriptionally: acts by phosphorylating AU-rich elements (AREs)-binding proteins ELAVL1, HNRNPA0, PABPC1 and TTP/ZFP36, leading to regulation of the stability and translation of TNF and IL6 mRNAs. Phosphorylation of TTP/ZFP36, a major post-transcriptional regulator of TNF, promotes its binding to 14-3-3 proteins and reduces its ARE mRNA affinity leading to inhibition of dependent degradation of ARE-containing transcripts. Phosphorylates CEP131 in response to cellular stress following ultraviolet irradiation which promotes binding of CEP131 to 14-3-3 proteins and inhibits formation of novel centriolar satellites (By similarity). Also involved in late G2/M checkpoint following DNA damage through a process of post-transcriptional mRNA stabilization: following DNA damage, relocalizes from nucleus to cytoplasm and phosphorylates HNRNPA0 and PARN, leading to stabilization of GADD45A mRNA. Involved in toll-like receptor signaling pathway (TLR) in dendritic cells: required for acute TLR-induced macropinocytosis by phosphorylating and activating RPS6KA3.</text>
</comment>
<comment type="catalytic activity">
    <reaction>
        <text>L-seryl-[protein] + ATP = O-phospho-L-seryl-[protein] + ADP + H(+)</text>
        <dbReference type="Rhea" id="RHEA:17989"/>
        <dbReference type="Rhea" id="RHEA-COMP:9863"/>
        <dbReference type="Rhea" id="RHEA-COMP:11604"/>
        <dbReference type="ChEBI" id="CHEBI:15378"/>
        <dbReference type="ChEBI" id="CHEBI:29999"/>
        <dbReference type="ChEBI" id="CHEBI:30616"/>
        <dbReference type="ChEBI" id="CHEBI:83421"/>
        <dbReference type="ChEBI" id="CHEBI:456216"/>
        <dbReference type="EC" id="2.7.11.1"/>
    </reaction>
</comment>
<comment type="catalytic activity">
    <reaction>
        <text>L-threonyl-[protein] + ATP = O-phospho-L-threonyl-[protein] + ADP + H(+)</text>
        <dbReference type="Rhea" id="RHEA:46608"/>
        <dbReference type="Rhea" id="RHEA-COMP:11060"/>
        <dbReference type="Rhea" id="RHEA-COMP:11605"/>
        <dbReference type="ChEBI" id="CHEBI:15378"/>
        <dbReference type="ChEBI" id="CHEBI:30013"/>
        <dbReference type="ChEBI" id="CHEBI:30616"/>
        <dbReference type="ChEBI" id="CHEBI:61977"/>
        <dbReference type="ChEBI" id="CHEBI:456216"/>
        <dbReference type="EC" id="2.7.11.1"/>
    </reaction>
</comment>
<comment type="activity regulation">
    <text evidence="1">Activated following phosphorylation by p38-alpha/MAPK14 following various stresses. Inhibited following sumoylation. Specifically inhibited by pyrrolopyridine inhibitors (By similarity).</text>
</comment>
<comment type="subunit">
    <text evidence="2">Heterodimer with p38-alpha/MAPK14; this heterodimer forms a stable complex: molecules are positioned 'face to face' so that the ATP-binding sites of both kinases are at the heterodimer interface. Interacts with PHC2. Interacts with HSF1.</text>
</comment>
<comment type="interaction">
    <interactant intactId="EBI-298776">
        <id>P49138</id>
    </interactant>
    <interactant intactId="EBI-298727">
        <id>P47811</id>
        <label>Mapk14</label>
    </interactant>
    <organismsDiffer>false</organismsDiffer>
    <experiments>2</experiments>
</comment>
<comment type="interaction">
    <interactant intactId="EBI-298776">
        <id>P49138</id>
    </interactant>
    <interactant intactId="EBI-927346">
        <id>Q64028</id>
        <label>Phc1</label>
    </interactant>
    <organismsDiffer>false</organismsDiffer>
    <experiments>2</experiments>
</comment>
<comment type="interaction">
    <interactant intactId="EBI-298776">
        <id>P49138</id>
    </interactant>
    <interactant intactId="EBI-642357">
        <id>Q9QWH1</id>
        <label>Phc2</label>
    </interactant>
    <organismsDiffer>false</organismsDiffer>
    <experiments>5</experiments>
</comment>
<comment type="subcellular location">
    <subcellularLocation>
        <location>Cytoplasm</location>
    </subcellularLocation>
    <subcellularLocation>
        <location>Nucleus</location>
    </subcellularLocation>
    <text>Phosphorylation and subsequent activation releases the autoinhibitory helix, resulting in the export from the nucleus into the cytoplasm.</text>
</comment>
<comment type="tissue specificity">
    <text evidence="11">Ubiquitously expressed (at protein level).</text>
</comment>
<comment type="PTM">
    <text evidence="1">Sumoylation inhibits the protein kinase activity.</text>
</comment>
<comment type="PTM">
    <text evidence="15 17">Phosphorylated and activated by MAP kinase p38-alpha/MAPK14 at Thr-208; Ser-258 and Thr-320.</text>
</comment>
<comment type="disruption phenotype">
    <text evidence="6 7 11">No visible phenotype. Mice are fertile and do not exhibit behavioral phenotype. Mice show decreased production of inflammatory cytokines such as TNF and IL6 upon LPS-stimulation. Impaired cytokine production make mice less sensitive to LPS-induced endotoxic shock, but more susceptible to bacterial infection. Moreover, the amount of MAP kinase p38 is significantly reduced in cells and tissues. Mice lacking both Mapkapk2 and Mapkapk3 show further reduction of TNF production.</text>
</comment>
<comment type="similarity">
    <text evidence="18">Belongs to the protein kinase superfamily. CAMK Ser/Thr protein kinase family.</text>
</comment>
<evidence type="ECO:0000250" key="1"/>
<evidence type="ECO:0000250" key="2">
    <source>
        <dbReference type="UniProtKB" id="P49137"/>
    </source>
</evidence>
<evidence type="ECO:0000255" key="3">
    <source>
        <dbReference type="PROSITE-ProRule" id="PRU00159"/>
    </source>
</evidence>
<evidence type="ECO:0000255" key="4">
    <source>
        <dbReference type="PROSITE-ProRule" id="PRU10027"/>
    </source>
</evidence>
<evidence type="ECO:0000256" key="5">
    <source>
        <dbReference type="SAM" id="MobiDB-lite"/>
    </source>
</evidence>
<evidence type="ECO:0000269" key="6">
    <source>
    </source>
</evidence>
<evidence type="ECO:0000269" key="7">
    <source>
    </source>
</evidence>
<evidence type="ECO:0000269" key="8">
    <source>
    </source>
</evidence>
<evidence type="ECO:0000269" key="9">
    <source>
    </source>
</evidence>
<evidence type="ECO:0000269" key="10">
    <source>
    </source>
</evidence>
<evidence type="ECO:0000269" key="11">
    <source>
    </source>
</evidence>
<evidence type="ECO:0000269" key="12">
    <source>
    </source>
</evidence>
<evidence type="ECO:0000269" key="13">
    <source>
    </source>
</evidence>
<evidence type="ECO:0000269" key="14">
    <source>
    </source>
</evidence>
<evidence type="ECO:0000269" key="15">
    <source>
    </source>
</evidence>
<evidence type="ECO:0000269" key="16">
    <source>
    </source>
</evidence>
<evidence type="ECO:0000269" key="17">
    <source>
    </source>
</evidence>
<evidence type="ECO:0000305" key="18"/>
<organism>
    <name type="scientific">Mus musculus</name>
    <name type="common">Mouse</name>
    <dbReference type="NCBI Taxonomy" id="10090"/>
    <lineage>
        <taxon>Eukaryota</taxon>
        <taxon>Metazoa</taxon>
        <taxon>Chordata</taxon>
        <taxon>Craniata</taxon>
        <taxon>Vertebrata</taxon>
        <taxon>Euteleostomi</taxon>
        <taxon>Mammalia</taxon>
        <taxon>Eutheria</taxon>
        <taxon>Euarchontoglires</taxon>
        <taxon>Glires</taxon>
        <taxon>Rodentia</taxon>
        <taxon>Myomorpha</taxon>
        <taxon>Muroidea</taxon>
        <taxon>Muridae</taxon>
        <taxon>Murinae</taxon>
        <taxon>Mus</taxon>
        <taxon>Mus</taxon>
    </lineage>
</organism>
<keyword id="KW-0067">ATP-binding</keyword>
<keyword id="KW-0963">Cytoplasm</keyword>
<keyword id="KW-0227">DNA damage</keyword>
<keyword id="KW-1017">Isopeptide bond</keyword>
<keyword id="KW-0418">Kinase</keyword>
<keyword id="KW-0547">Nucleotide-binding</keyword>
<keyword id="KW-0539">Nucleus</keyword>
<keyword id="KW-0597">Phosphoprotein</keyword>
<keyword id="KW-1185">Reference proteome</keyword>
<keyword id="KW-0723">Serine/threonine-protein kinase</keyword>
<keyword id="KW-0808">Transferase</keyword>
<keyword id="KW-0832">Ubl conjugation</keyword>
<proteinExistence type="evidence at protein level"/>
<name>MAPK2_MOUSE</name>
<feature type="chain" id="PRO_0000086289" description="MAP kinase-activated protein kinase 2">
    <location>
        <begin position="1"/>
        <end position="386"/>
    </location>
</feature>
<feature type="domain" description="Protein kinase" evidence="3">
    <location>
        <begin position="50"/>
        <end position="311"/>
    </location>
</feature>
<feature type="region of interest" description="Disordered" evidence="5">
    <location>
        <begin position="1"/>
        <end position="29"/>
    </location>
</feature>
<feature type="region of interest" description="Autoinhibitory helix">
    <location>
        <begin position="314"/>
        <end position="350"/>
    </location>
</feature>
<feature type="region of interest" description="p38 MAPK-binding site" evidence="1">
    <location>
        <begin position="352"/>
        <end position="376"/>
    </location>
</feature>
<feature type="short sequence motif" description="Nuclear export signal (NES)">
    <location>
        <begin position="331"/>
        <end position="354"/>
    </location>
</feature>
<feature type="short sequence motif" description="Nuclear export signal (NES)" evidence="1">
    <location>
        <begin position="342"/>
        <end position="351"/>
    </location>
</feature>
<feature type="short sequence motif" description="Bipartite nuclear localization signal 1">
    <location>
        <begin position="357"/>
        <end position="360"/>
    </location>
</feature>
<feature type="short sequence motif" description="Bipartite nuclear localization signal 2">
    <location>
        <begin position="371"/>
        <end position="375"/>
    </location>
</feature>
<feature type="compositionally biased region" description="Pro residues" evidence="5">
    <location>
        <begin position="8"/>
        <end position="29"/>
    </location>
</feature>
<feature type="active site" description="Proton acceptor" evidence="3 4">
    <location>
        <position position="172"/>
    </location>
</feature>
<feature type="binding site" evidence="3">
    <location>
        <begin position="56"/>
        <end position="64"/>
    </location>
    <ligand>
        <name>ATP</name>
        <dbReference type="ChEBI" id="CHEBI:30616"/>
    </ligand>
</feature>
<feature type="binding site" evidence="3">
    <location>
        <position position="79"/>
    </location>
    <ligand>
        <name>ATP</name>
        <dbReference type="ChEBI" id="CHEBI:30616"/>
    </ligand>
</feature>
<feature type="binding site" evidence="1">
    <location>
        <begin position="125"/>
        <end position="127"/>
    </location>
    <ligand>
        <name>staurosporine</name>
        <dbReference type="ChEBI" id="CHEBI:57491"/>
    </ligand>
</feature>
<feature type="modified residue" description="Phosphothreonine; by MAPK14" evidence="15 17">
    <location>
        <position position="208"/>
    </location>
</feature>
<feature type="modified residue" description="Phosphoserine; by MAPK14" evidence="2">
    <location>
        <position position="258"/>
    </location>
</feature>
<feature type="modified residue" description="Phosphoserine; by autocatalysis" evidence="1">
    <location>
        <position position="314"/>
    </location>
</feature>
<feature type="modified residue" description="Phosphothreonine; by MAPK14" evidence="15 17">
    <location>
        <position position="320"/>
    </location>
</feature>
<feature type="cross-link" description="Glycyl lysine isopeptide (Lys-Gly) (interchain with G-Cter in SUMO)" evidence="1">
    <location>
        <position position="339"/>
    </location>
</feature>
<feature type="mutagenesis site" description="Strong decrease in kinase activity; when associated with A-320." evidence="15">
    <original>T</original>
    <variation>A</variation>
    <location>
        <position position="208"/>
    </location>
</feature>
<feature type="mutagenesis site" description="Mimicks phosphorylation state and constitutive protein kinase activity; when associated with E-320." evidence="15">
    <original>T</original>
    <variation>E</variation>
    <location>
        <position position="208"/>
    </location>
</feature>
<feature type="mutagenesis site" description="Strong decrease in kinase activity; when associated with A-208." evidence="15">
    <original>T</original>
    <variation>A</variation>
    <location>
        <position position="320"/>
    </location>
</feature>
<feature type="mutagenesis site" description="Mimicks phosphorylation state and constitutive protein kinase activity; when associated with E-208." evidence="15">
    <original>T</original>
    <variation>E</variation>
    <location>
        <position position="320"/>
    </location>
</feature>
<feature type="mutagenesis site" description="Leads to constitutive protein kinase activity." evidence="15">
    <original>K</original>
    <variation>R</variation>
    <location>
        <position position="329"/>
    </location>
</feature>
<feature type="mutagenesis site" description="Leads to constitutive protein kinase activity." evidence="15">
    <original>W</original>
    <variation>A</variation>
    <location>
        <position position="335"/>
    </location>
</feature>
<feature type="sequence conflict" description="In Ref. 1; CAA54183." evidence="18" ref="1">
    <original>LS</original>
    <variation>IR</variation>
    <location>
        <begin position="2"/>
        <end position="3"/>
    </location>
</feature>